<comment type="function">
    <text evidence="3 4 5">Secretory calcium-dependent phospholipase A2 that primarily targets dietary phospholipids in the intestinal tract. Hydrolyzes the ester bond of the fatty acyl group attached at sn-2 position of phospholipids (phospholipase A2 activity) with preference for phosphatidylethanolamines and phosphatidylglycerols over phosphatidylcholines. May play a role in the biosynthesis of N-acyl ethanolamines that regulate energy metabolism and inflammation in the intestinal tract. Hydrolyzes N-acyl phosphatidylethanolamines to N-acyl lysophosphatidylethanolamines, which are further cleaved by a lysophospholipase D to release N-acyl ethanolamines (By similarity). May act in an autocrine and paracrine manner (By similarity). Has anti-helminth activity in a process regulated by gut microbiota. Upon helminth infection of intestinal epithelia, directly affects phosphatidylethanolamine contents in the membrane of helminth larvae, likely controlling an array of phospholipid-mediated cellular processes such as membrane fusion and cell division while providing for better immune recognition, ultimately reducing larvae integrity and infectivity (By similarity).</text>
</comment>
<comment type="catalytic activity">
    <reaction evidence="3 4 6 7">
        <text>a 1,2-diacyl-sn-glycero-3-phosphocholine + H2O = a 1-acyl-sn-glycero-3-phosphocholine + a fatty acid + H(+)</text>
        <dbReference type="Rhea" id="RHEA:15801"/>
        <dbReference type="ChEBI" id="CHEBI:15377"/>
        <dbReference type="ChEBI" id="CHEBI:15378"/>
        <dbReference type="ChEBI" id="CHEBI:28868"/>
        <dbReference type="ChEBI" id="CHEBI:57643"/>
        <dbReference type="ChEBI" id="CHEBI:58168"/>
        <dbReference type="EC" id="3.1.1.4"/>
    </reaction>
</comment>
<comment type="catalytic activity">
    <reaction evidence="3">
        <text>1,2-ditetradecanoyl-sn-glycero-3-phosphocholine + H2O = 1-tetradecanoyl-sn-glycero-3-phosphocholine + tetradecanoate + H(+)</text>
        <dbReference type="Rhea" id="RHEA:54456"/>
        <dbReference type="ChEBI" id="CHEBI:15377"/>
        <dbReference type="ChEBI" id="CHEBI:15378"/>
        <dbReference type="ChEBI" id="CHEBI:30807"/>
        <dbReference type="ChEBI" id="CHEBI:45240"/>
        <dbReference type="ChEBI" id="CHEBI:64489"/>
    </reaction>
</comment>
<comment type="catalytic activity">
    <reaction evidence="4">
        <text>1,2-dihexadecanoyl-sn-glycero-3-phosphocholine + H2O = 1-hexadecanoyl-sn-glycero-3-phosphocholine + hexadecanoate + H(+)</text>
        <dbReference type="Rhea" id="RHEA:41223"/>
        <dbReference type="ChEBI" id="CHEBI:7896"/>
        <dbReference type="ChEBI" id="CHEBI:15377"/>
        <dbReference type="ChEBI" id="CHEBI:15378"/>
        <dbReference type="ChEBI" id="CHEBI:72998"/>
        <dbReference type="ChEBI" id="CHEBI:72999"/>
    </reaction>
    <physiologicalReaction direction="left-to-right" evidence="4">
        <dbReference type="Rhea" id="RHEA:41224"/>
    </physiologicalReaction>
</comment>
<comment type="catalytic activity">
    <reaction evidence="3">
        <text>1-hexadecanoyl-2-(9Z-octadecenoyl)-sn-glycero-3-phosphocholine + H2O = 1-hexadecanoyl-sn-glycero-3-phosphocholine + (9Z)-octadecenoate + H(+)</text>
        <dbReference type="Rhea" id="RHEA:38779"/>
        <dbReference type="ChEBI" id="CHEBI:15377"/>
        <dbReference type="ChEBI" id="CHEBI:15378"/>
        <dbReference type="ChEBI" id="CHEBI:30823"/>
        <dbReference type="ChEBI" id="CHEBI:72998"/>
        <dbReference type="ChEBI" id="CHEBI:73001"/>
    </reaction>
    <physiologicalReaction direction="left-to-right" evidence="3">
        <dbReference type="Rhea" id="RHEA:38780"/>
    </physiologicalReaction>
</comment>
<comment type="catalytic activity">
    <reaction evidence="4">
        <text>1-hexadecanoyl-2-(5Z,8Z,11Z,14Z-eicosatetraenoyl)-sn-glycero-3-phosphocholine + H2O = 1-hexadecanoyl-sn-glycero-3-phosphocholine + (5Z,8Z,11Z,14Z)-eicosatetraenoate + H(+)</text>
        <dbReference type="Rhea" id="RHEA:40427"/>
        <dbReference type="ChEBI" id="CHEBI:15377"/>
        <dbReference type="ChEBI" id="CHEBI:15378"/>
        <dbReference type="ChEBI" id="CHEBI:32395"/>
        <dbReference type="ChEBI" id="CHEBI:72998"/>
        <dbReference type="ChEBI" id="CHEBI:73003"/>
    </reaction>
    <physiologicalReaction direction="left-to-right" evidence="4">
        <dbReference type="Rhea" id="RHEA:40428"/>
    </physiologicalReaction>
</comment>
<comment type="catalytic activity">
    <reaction evidence="3">
        <text>1-hexadecanoyl-2-(9Z-octadecenoyl)-sn-glycero-3-phospho-(1'-sn-glycerol) + H2O = 1-hexadecanoyl-sn-glycero-3-phospho-(1'-sn-glycerol) + (9Z)-octadecenoate + H(+)</text>
        <dbReference type="Rhea" id="RHEA:40919"/>
        <dbReference type="ChEBI" id="CHEBI:15377"/>
        <dbReference type="ChEBI" id="CHEBI:15378"/>
        <dbReference type="ChEBI" id="CHEBI:30823"/>
        <dbReference type="ChEBI" id="CHEBI:72841"/>
        <dbReference type="ChEBI" id="CHEBI:75158"/>
    </reaction>
    <physiologicalReaction direction="left-to-right" evidence="3">
        <dbReference type="Rhea" id="RHEA:40920"/>
    </physiologicalReaction>
</comment>
<comment type="catalytic activity">
    <reaction evidence="4">
        <text>N-hexadecanoyl-1,2-di-(9Z-octadecenoyl)-sn-glycero-3-phosphoethanolamine + H2O = N-hexadecanoyl-1-(9Z-octadecenoyl)-sn-glycero-3-phosphoethanolamine + (9Z)-octadecenoate + H(+)</text>
        <dbReference type="Rhea" id="RHEA:45424"/>
        <dbReference type="ChEBI" id="CHEBI:15377"/>
        <dbReference type="ChEBI" id="CHEBI:15378"/>
        <dbReference type="ChEBI" id="CHEBI:30823"/>
        <dbReference type="ChEBI" id="CHEBI:78097"/>
        <dbReference type="ChEBI" id="CHEBI:85217"/>
    </reaction>
    <physiologicalReaction direction="left-to-right" evidence="4">
        <dbReference type="Rhea" id="RHEA:45425"/>
    </physiologicalReaction>
</comment>
<comment type="catalytic activity">
    <reaction evidence="4">
        <text>1-hexadecanoyl-2-(9Z,12Z-octadecadienoyl)-sn-glycero-3-phosphoethanolamine + H2O = 1-hexadecanoyl-sn-glycero-3-phosphoethanolamine + (9Z,12Z)-octadecadienoate + H(+)</text>
        <dbReference type="Rhea" id="RHEA:40815"/>
        <dbReference type="ChEBI" id="CHEBI:15377"/>
        <dbReference type="ChEBI" id="CHEBI:15378"/>
        <dbReference type="ChEBI" id="CHEBI:30245"/>
        <dbReference type="ChEBI" id="CHEBI:73004"/>
        <dbReference type="ChEBI" id="CHEBI:73008"/>
    </reaction>
    <physiologicalReaction direction="left-to-right" evidence="4">
        <dbReference type="Rhea" id="RHEA:40816"/>
    </physiologicalReaction>
</comment>
<comment type="catalytic activity">
    <reaction evidence="4">
        <text>N,1-dihexadecanoyl-2-(9Z,12Z-octadecadienoyl)-sn-glycero-3-phosphoethanolamine + H2O = N,1-dihexadecanoyl-sn-glycero-3-phosphoethanolamine + (9Z,12Z)-octadecadienoate + H(+)</text>
        <dbReference type="Rhea" id="RHEA:56424"/>
        <dbReference type="ChEBI" id="CHEBI:15377"/>
        <dbReference type="ChEBI" id="CHEBI:15378"/>
        <dbReference type="ChEBI" id="CHEBI:30245"/>
        <dbReference type="ChEBI" id="CHEBI:85334"/>
        <dbReference type="ChEBI" id="CHEBI:85335"/>
    </reaction>
    <physiologicalReaction direction="left-to-right" evidence="4">
        <dbReference type="Rhea" id="RHEA:56425"/>
    </physiologicalReaction>
</comment>
<comment type="cofactor">
    <cofactor evidence="2">
        <name>Ca(2+)</name>
        <dbReference type="ChEBI" id="CHEBI:29108"/>
    </cofactor>
    <text evidence="2">Binds 1 Ca(2+) ion per subunit.</text>
</comment>
<comment type="subunit">
    <text evidence="1">Monomer or homodimer.</text>
</comment>
<comment type="subcellular location">
    <subcellularLocation>
        <location evidence="3">Secreted</location>
    </subcellularLocation>
    <text evidence="3">Secreted from pancreatic acinar cells in its inactive form.</text>
</comment>
<comment type="PTM">
    <text evidence="3">Activated by trypsin cleavage in the duodenum. Can also be activated by thrombin or autocatalytically.</text>
</comment>
<comment type="similarity">
    <text evidence="8">Belongs to the phospholipase A2 family.</text>
</comment>
<sequence length="146" mass="16236">MKFLVLAALLTVAAAEGGISPRAVWQFRNMIKCTIPESDPLKDYNDYGCYCGLGGSGTPVDELDKCCQTHDHCYSEAKKLDSCKFLLDNPYTKIYSYSCSGSEITCSSKNKDCQAFICNCDRSAAICFSKAPYNKEHKNLDTKKYC</sequence>
<evidence type="ECO:0000250" key="1">
    <source>
        <dbReference type="UniProtKB" id="P00592"/>
    </source>
</evidence>
<evidence type="ECO:0000250" key="2">
    <source>
        <dbReference type="UniProtKB" id="P00593"/>
    </source>
</evidence>
<evidence type="ECO:0000250" key="3">
    <source>
        <dbReference type="UniProtKB" id="P04054"/>
    </source>
</evidence>
<evidence type="ECO:0000250" key="4">
    <source>
        <dbReference type="UniProtKB" id="P04055"/>
    </source>
</evidence>
<evidence type="ECO:0000250" key="5">
    <source>
        <dbReference type="UniProtKB" id="Q9Z0Y2"/>
    </source>
</evidence>
<evidence type="ECO:0000255" key="6">
    <source>
        <dbReference type="PROSITE-ProRule" id="PRU10035"/>
    </source>
</evidence>
<evidence type="ECO:0000255" key="7">
    <source>
        <dbReference type="PROSITE-ProRule" id="PRU10036"/>
    </source>
</evidence>
<evidence type="ECO:0000305" key="8"/>
<name>PA21B_CANLF</name>
<gene>
    <name type="primary">PLA2G1B</name>
</gene>
<dbReference type="EC" id="3.1.1.4" evidence="3 4"/>
<dbReference type="EMBL" id="D00035">
    <property type="protein sequence ID" value="BAA00023.1"/>
    <property type="molecule type" value="mRNA"/>
</dbReference>
<dbReference type="EMBL" id="M35301">
    <property type="protein sequence ID" value="AAA30883.1"/>
    <property type="molecule type" value="mRNA"/>
</dbReference>
<dbReference type="PIR" id="S11316">
    <property type="entry name" value="PSDG"/>
</dbReference>
<dbReference type="RefSeq" id="NP_001003320.1">
    <property type="nucleotide sequence ID" value="NM_001003320.1"/>
</dbReference>
<dbReference type="SMR" id="P06596"/>
<dbReference type="FunCoup" id="P06596">
    <property type="interactions" value="122"/>
</dbReference>
<dbReference type="STRING" id="9615.ENSCAFP00000015064"/>
<dbReference type="PaxDb" id="9612-ENSCAFP00000015064"/>
<dbReference type="Ensembl" id="ENSCAFT00000016284.5">
    <property type="protein sequence ID" value="ENSCAFP00000015064.3"/>
    <property type="gene ID" value="ENSCAFG00000010263.6"/>
</dbReference>
<dbReference type="Ensembl" id="ENSCAFT00030043741.1">
    <property type="protein sequence ID" value="ENSCAFP00030038174.1"/>
    <property type="gene ID" value="ENSCAFG00030023773.1"/>
</dbReference>
<dbReference type="Ensembl" id="ENSCAFT00040036824.1">
    <property type="protein sequence ID" value="ENSCAFP00040032073.1"/>
    <property type="gene ID" value="ENSCAFG00040019883.1"/>
</dbReference>
<dbReference type="Ensembl" id="ENSCAFT00845052590.1">
    <property type="protein sequence ID" value="ENSCAFP00845041272.1"/>
    <property type="gene ID" value="ENSCAFG00845029696.1"/>
</dbReference>
<dbReference type="GeneID" id="404011"/>
<dbReference type="KEGG" id="cfa:404011"/>
<dbReference type="CTD" id="5319"/>
<dbReference type="VEuPathDB" id="HostDB:ENSCAFG00845029696"/>
<dbReference type="VGNC" id="VGNC:44622">
    <property type="gene designation" value="PLA2G1B"/>
</dbReference>
<dbReference type="eggNOG" id="KOG4087">
    <property type="taxonomic scope" value="Eukaryota"/>
</dbReference>
<dbReference type="GeneTree" id="ENSGT00940000154885"/>
<dbReference type="InParanoid" id="P06596"/>
<dbReference type="OMA" id="CEAFLCN"/>
<dbReference type="OrthoDB" id="5841574at2759"/>
<dbReference type="TreeFam" id="TF319283"/>
<dbReference type="Reactome" id="R-CFA-1482788">
    <property type="pathway name" value="Acyl chain remodelling of PC"/>
</dbReference>
<dbReference type="Reactome" id="R-CFA-1482801">
    <property type="pathway name" value="Acyl chain remodelling of PS"/>
</dbReference>
<dbReference type="Reactome" id="R-CFA-1482839">
    <property type="pathway name" value="Acyl chain remodelling of PE"/>
</dbReference>
<dbReference type="Reactome" id="R-CFA-1482922">
    <property type="pathway name" value="Acyl chain remodelling of PI"/>
</dbReference>
<dbReference type="Reactome" id="R-CFA-1482925">
    <property type="pathway name" value="Acyl chain remodelling of PG"/>
</dbReference>
<dbReference type="Reactome" id="R-CFA-1483166">
    <property type="pathway name" value="Synthesis of PA"/>
</dbReference>
<dbReference type="Proteomes" id="UP000002254">
    <property type="component" value="Chromosome 26"/>
</dbReference>
<dbReference type="Proteomes" id="UP000694429">
    <property type="component" value="Chromosome 26"/>
</dbReference>
<dbReference type="Proteomes" id="UP000694542">
    <property type="component" value="Chromosome 26"/>
</dbReference>
<dbReference type="Proteomes" id="UP000805418">
    <property type="component" value="Chromosome 26"/>
</dbReference>
<dbReference type="Bgee" id="ENSCAFG00000010263">
    <property type="expression patterns" value="Expressed in pancreas and 37 other cell types or tissues"/>
</dbReference>
<dbReference type="GO" id="GO:0009986">
    <property type="term" value="C:cell surface"/>
    <property type="evidence" value="ECO:0007669"/>
    <property type="project" value="Ensembl"/>
</dbReference>
<dbReference type="GO" id="GO:0005615">
    <property type="term" value="C:extracellular space"/>
    <property type="evidence" value="ECO:0007669"/>
    <property type="project" value="Ensembl"/>
</dbReference>
<dbReference type="GO" id="GO:0032052">
    <property type="term" value="F:bile acid binding"/>
    <property type="evidence" value="ECO:0000250"/>
    <property type="project" value="UniProtKB"/>
</dbReference>
<dbReference type="GO" id="GO:0005509">
    <property type="term" value="F:calcium ion binding"/>
    <property type="evidence" value="ECO:0000318"/>
    <property type="project" value="GO_Central"/>
</dbReference>
<dbReference type="GO" id="GO:0047498">
    <property type="term" value="F:calcium-dependent phospholipase A2 activity"/>
    <property type="evidence" value="ECO:0000250"/>
    <property type="project" value="UniProtKB"/>
</dbReference>
<dbReference type="GO" id="GO:0005543">
    <property type="term" value="F:phospholipid binding"/>
    <property type="evidence" value="ECO:0000318"/>
    <property type="project" value="GO_Central"/>
</dbReference>
<dbReference type="GO" id="GO:0005102">
    <property type="term" value="F:signaling receptor binding"/>
    <property type="evidence" value="ECO:0000318"/>
    <property type="project" value="GO_Central"/>
</dbReference>
<dbReference type="GO" id="GO:0019731">
    <property type="term" value="P:antibacterial humoral response"/>
    <property type="evidence" value="ECO:0007669"/>
    <property type="project" value="Ensembl"/>
</dbReference>
<dbReference type="GO" id="GO:0061844">
    <property type="term" value="P:antimicrobial humoral immune response mediated by antimicrobial peptide"/>
    <property type="evidence" value="ECO:0007669"/>
    <property type="project" value="Ensembl"/>
</dbReference>
<dbReference type="GO" id="GO:0050482">
    <property type="term" value="P:arachidonate secretion"/>
    <property type="evidence" value="ECO:0007669"/>
    <property type="project" value="InterPro"/>
</dbReference>
<dbReference type="GO" id="GO:0050830">
    <property type="term" value="P:defense response to Gram-positive bacterium"/>
    <property type="evidence" value="ECO:0007669"/>
    <property type="project" value="Ensembl"/>
</dbReference>
<dbReference type="GO" id="GO:0006633">
    <property type="term" value="P:fatty acid biosynthetic process"/>
    <property type="evidence" value="ECO:0007669"/>
    <property type="project" value="Ensembl"/>
</dbReference>
<dbReference type="GO" id="GO:0002227">
    <property type="term" value="P:innate immune response in mucosa"/>
    <property type="evidence" value="ECO:0007669"/>
    <property type="project" value="Ensembl"/>
</dbReference>
<dbReference type="GO" id="GO:0016042">
    <property type="term" value="P:lipid catabolic process"/>
    <property type="evidence" value="ECO:0007669"/>
    <property type="project" value="Ensembl"/>
</dbReference>
<dbReference type="GO" id="GO:0046470">
    <property type="term" value="P:phosphatidylcholine metabolic process"/>
    <property type="evidence" value="ECO:0000318"/>
    <property type="project" value="GO_Central"/>
</dbReference>
<dbReference type="GO" id="GO:0046471">
    <property type="term" value="P:phosphatidylglycerol metabolic process"/>
    <property type="evidence" value="ECO:0000250"/>
    <property type="project" value="UniProtKB"/>
</dbReference>
<dbReference type="GO" id="GO:0048146">
    <property type="term" value="P:positive regulation of fibroblast proliferation"/>
    <property type="evidence" value="ECO:0007669"/>
    <property type="project" value="Ensembl"/>
</dbReference>
<dbReference type="GO" id="GO:1904635">
    <property type="term" value="P:positive regulation of podocyte apoptotic process"/>
    <property type="evidence" value="ECO:0000250"/>
    <property type="project" value="UniProtKB"/>
</dbReference>
<dbReference type="CDD" id="cd00125">
    <property type="entry name" value="PLA2c"/>
    <property type="match status" value="1"/>
</dbReference>
<dbReference type="FunFam" id="1.20.90.10:FF:000011">
    <property type="entry name" value="Phospholipase A(2)"/>
    <property type="match status" value="1"/>
</dbReference>
<dbReference type="Gene3D" id="1.20.90.10">
    <property type="entry name" value="Phospholipase A2 domain"/>
    <property type="match status" value="1"/>
</dbReference>
<dbReference type="InterPro" id="IPR001211">
    <property type="entry name" value="PLipase_A2"/>
</dbReference>
<dbReference type="InterPro" id="IPR033112">
    <property type="entry name" value="PLipase_A2_Asp_AS"/>
</dbReference>
<dbReference type="InterPro" id="IPR016090">
    <property type="entry name" value="PLipase_A2_dom"/>
</dbReference>
<dbReference type="InterPro" id="IPR036444">
    <property type="entry name" value="PLipase_A2_dom_sf"/>
</dbReference>
<dbReference type="InterPro" id="IPR033113">
    <property type="entry name" value="PLipase_A2_His_AS"/>
</dbReference>
<dbReference type="PANTHER" id="PTHR11716:SF94">
    <property type="entry name" value="PHOSPHOLIPASE A2"/>
    <property type="match status" value="1"/>
</dbReference>
<dbReference type="PANTHER" id="PTHR11716">
    <property type="entry name" value="PHOSPHOLIPASE A2 FAMILY MEMBER"/>
    <property type="match status" value="1"/>
</dbReference>
<dbReference type="Pfam" id="PF00068">
    <property type="entry name" value="Phospholip_A2_1"/>
    <property type="match status" value="1"/>
</dbReference>
<dbReference type="PRINTS" id="PR00389">
    <property type="entry name" value="PHPHLIPASEA2"/>
</dbReference>
<dbReference type="SMART" id="SM00085">
    <property type="entry name" value="PA2c"/>
    <property type="match status" value="1"/>
</dbReference>
<dbReference type="SUPFAM" id="SSF48619">
    <property type="entry name" value="Phospholipase A2, PLA2"/>
    <property type="match status" value="1"/>
</dbReference>
<dbReference type="PROSITE" id="PS00119">
    <property type="entry name" value="PA2_ASP"/>
    <property type="match status" value="1"/>
</dbReference>
<dbReference type="PROSITE" id="PS00118">
    <property type="entry name" value="PA2_HIS"/>
    <property type="match status" value="1"/>
</dbReference>
<organism>
    <name type="scientific">Canis lupus familiaris</name>
    <name type="common">Dog</name>
    <name type="synonym">Canis familiaris</name>
    <dbReference type="NCBI Taxonomy" id="9615"/>
    <lineage>
        <taxon>Eukaryota</taxon>
        <taxon>Metazoa</taxon>
        <taxon>Chordata</taxon>
        <taxon>Craniata</taxon>
        <taxon>Vertebrata</taxon>
        <taxon>Euteleostomi</taxon>
        <taxon>Mammalia</taxon>
        <taxon>Eutheria</taxon>
        <taxon>Laurasiatheria</taxon>
        <taxon>Carnivora</taxon>
        <taxon>Caniformia</taxon>
        <taxon>Canidae</taxon>
        <taxon>Canis</taxon>
    </lineage>
</organism>
<accession>P06596</accession>
<reference key="1">
    <citation type="journal article" date="1986" name="J. Biochem.">
        <title>Dog and rat pancreatic phospholipases A2: complete amino acid sequences deduced from complementary DNAs.</title>
        <authorList>
            <person name="Ohara O."/>
            <person name="Tamaki M."/>
            <person name="Nakamura E."/>
            <person name="Tsuruta Y."/>
            <person name="Fujii Y."/>
            <person name="Shin M."/>
            <person name="Teraoka H."/>
            <person name="Okamoto M."/>
        </authorList>
    </citation>
    <scope>NUCLEOTIDE SEQUENCE [MRNA]</scope>
</reference>
<reference key="2">
    <citation type="journal article" date="1990" name="Eur. J. Biochem.">
        <title>Isolation and sequence of the canine pancreatic phospholipase A2 gene.</title>
        <authorList>
            <person name="Kerfelec B."/>
            <person name="Laforge K.S."/>
            <person name="Vasiloudes P."/>
            <person name="Puigserver A."/>
            <person name="Scheele G.A."/>
        </authorList>
    </citation>
    <scope>NUCLEOTIDE SEQUENCE [MRNA]</scope>
</reference>
<reference key="3">
    <citation type="journal article" date="1986" name="Pancreas">
        <title>Primary structures of canine pancreatic lipase and phospholipase A2 messenger RNAs.</title>
        <authorList>
            <person name="Kerfelec B."/>
            <person name="Laforge K.S."/>
            <person name="Puigserver A."/>
            <person name="Scheele G.A."/>
        </authorList>
    </citation>
    <scope>NUCLEOTIDE SEQUENCE [MRNA]</scope>
</reference>
<protein>
    <recommendedName>
        <fullName>Phospholipase A2</fullName>
        <ecNumber evidence="3 4">3.1.1.4</ecNumber>
    </recommendedName>
    <alternativeName>
        <fullName>Group IB phospholipase A2</fullName>
    </alternativeName>
    <alternativeName>
        <fullName>Phosphatidylcholine 2-acylhydrolase 1B</fullName>
    </alternativeName>
</protein>
<feature type="signal peptide">
    <location>
        <begin position="1"/>
        <end position="15"/>
    </location>
</feature>
<feature type="propeptide" id="PRO_0000022733">
    <location>
        <begin position="16"/>
        <end position="22"/>
    </location>
</feature>
<feature type="chain" id="PRO_0000022734" description="Phospholipase A2">
    <location>
        <begin position="23"/>
        <end position="146"/>
    </location>
</feature>
<feature type="active site" evidence="2">
    <location>
        <position position="70"/>
    </location>
</feature>
<feature type="active site" evidence="2">
    <location>
        <position position="121"/>
    </location>
</feature>
<feature type="binding site" evidence="2">
    <location>
        <position position="50"/>
    </location>
    <ligand>
        <name>Ca(2+)</name>
        <dbReference type="ChEBI" id="CHEBI:29108"/>
    </ligand>
</feature>
<feature type="binding site" evidence="2">
    <location>
        <position position="52"/>
    </location>
    <ligand>
        <name>Ca(2+)</name>
        <dbReference type="ChEBI" id="CHEBI:29108"/>
    </ligand>
</feature>
<feature type="binding site" evidence="2">
    <location>
        <position position="54"/>
    </location>
    <ligand>
        <name>Ca(2+)</name>
        <dbReference type="ChEBI" id="CHEBI:29108"/>
    </ligand>
</feature>
<feature type="binding site" evidence="2">
    <location>
        <position position="71"/>
    </location>
    <ligand>
        <name>Ca(2+)</name>
        <dbReference type="ChEBI" id="CHEBI:29108"/>
    </ligand>
</feature>
<feature type="disulfide bond" evidence="2">
    <location>
        <begin position="33"/>
        <end position="99"/>
    </location>
</feature>
<feature type="disulfide bond" evidence="2">
    <location>
        <begin position="49"/>
        <end position="146"/>
    </location>
</feature>
<feature type="disulfide bond" evidence="2">
    <location>
        <begin position="51"/>
        <end position="67"/>
    </location>
</feature>
<feature type="disulfide bond" evidence="2">
    <location>
        <begin position="66"/>
        <end position="127"/>
    </location>
</feature>
<feature type="disulfide bond" evidence="2">
    <location>
        <begin position="73"/>
        <end position="120"/>
    </location>
</feature>
<feature type="disulfide bond" evidence="2">
    <location>
        <begin position="83"/>
        <end position="113"/>
    </location>
</feature>
<feature type="disulfide bond" evidence="2">
    <location>
        <begin position="106"/>
        <end position="118"/>
    </location>
</feature>
<keyword id="KW-0068">Autocatalytic cleavage</keyword>
<keyword id="KW-0106">Calcium</keyword>
<keyword id="KW-1015">Disulfide bond</keyword>
<keyword id="KW-0378">Hydrolase</keyword>
<keyword id="KW-0443">Lipid metabolism</keyword>
<keyword id="KW-0479">Metal-binding</keyword>
<keyword id="KW-1208">Phospholipid metabolism</keyword>
<keyword id="KW-1185">Reference proteome</keyword>
<keyword id="KW-0964">Secreted</keyword>
<keyword id="KW-0732">Signal</keyword>
<keyword id="KW-0865">Zymogen</keyword>
<proteinExistence type="evidence at transcript level"/>